<name>RL3_BRUA2</name>
<gene>
    <name evidence="1" type="primary">rplC</name>
    <name type="ordered locus">BAB1_1255</name>
</gene>
<proteinExistence type="inferred from homology"/>
<accession>Q2YM03</accession>
<feature type="chain" id="PRO_0000241324" description="Large ribosomal subunit protein uL3">
    <location>
        <begin position="1"/>
        <end position="237"/>
    </location>
</feature>
<feature type="region of interest" description="Disordered" evidence="2">
    <location>
        <begin position="133"/>
        <end position="155"/>
    </location>
</feature>
<feature type="region of interest" description="Disordered" evidence="2">
    <location>
        <begin position="213"/>
        <end position="237"/>
    </location>
</feature>
<feature type="compositionally biased region" description="Polar residues" evidence="2">
    <location>
        <begin position="135"/>
        <end position="150"/>
    </location>
</feature>
<feature type="compositionally biased region" description="Low complexity" evidence="2">
    <location>
        <begin position="220"/>
        <end position="237"/>
    </location>
</feature>
<feature type="modified residue" description="N5-methylglutamine" evidence="1">
    <location>
        <position position="151"/>
    </location>
</feature>
<evidence type="ECO:0000255" key="1">
    <source>
        <dbReference type="HAMAP-Rule" id="MF_01325"/>
    </source>
</evidence>
<evidence type="ECO:0000256" key="2">
    <source>
        <dbReference type="SAM" id="MobiDB-lite"/>
    </source>
</evidence>
<evidence type="ECO:0000305" key="3"/>
<keyword id="KW-0488">Methylation</keyword>
<keyword id="KW-1185">Reference proteome</keyword>
<keyword id="KW-0687">Ribonucleoprotein</keyword>
<keyword id="KW-0689">Ribosomal protein</keyword>
<keyword id="KW-0694">RNA-binding</keyword>
<keyword id="KW-0699">rRNA-binding</keyword>
<dbReference type="EMBL" id="AM040264">
    <property type="protein sequence ID" value="CAJ11211.1"/>
    <property type="molecule type" value="Genomic_DNA"/>
</dbReference>
<dbReference type="RefSeq" id="WP_002964362.1">
    <property type="nucleotide sequence ID" value="NZ_KN046823.1"/>
</dbReference>
<dbReference type="SMR" id="Q2YM03"/>
<dbReference type="STRING" id="359391.BAB1_1255"/>
<dbReference type="GeneID" id="93016439"/>
<dbReference type="KEGG" id="bmf:BAB1_1255"/>
<dbReference type="PATRIC" id="fig|359391.11.peg.155"/>
<dbReference type="HOGENOM" id="CLU_044142_2_0_5"/>
<dbReference type="Proteomes" id="UP000002719">
    <property type="component" value="Chromosome I"/>
</dbReference>
<dbReference type="GO" id="GO:0022625">
    <property type="term" value="C:cytosolic large ribosomal subunit"/>
    <property type="evidence" value="ECO:0007669"/>
    <property type="project" value="TreeGrafter"/>
</dbReference>
<dbReference type="GO" id="GO:0019843">
    <property type="term" value="F:rRNA binding"/>
    <property type="evidence" value="ECO:0007669"/>
    <property type="project" value="UniProtKB-UniRule"/>
</dbReference>
<dbReference type="GO" id="GO:0003735">
    <property type="term" value="F:structural constituent of ribosome"/>
    <property type="evidence" value="ECO:0007669"/>
    <property type="project" value="InterPro"/>
</dbReference>
<dbReference type="GO" id="GO:0006412">
    <property type="term" value="P:translation"/>
    <property type="evidence" value="ECO:0007669"/>
    <property type="project" value="UniProtKB-UniRule"/>
</dbReference>
<dbReference type="FunFam" id="2.40.30.10:FF:000004">
    <property type="entry name" value="50S ribosomal protein L3"/>
    <property type="match status" value="1"/>
</dbReference>
<dbReference type="FunFam" id="3.30.160.810:FF:000001">
    <property type="entry name" value="50S ribosomal protein L3"/>
    <property type="match status" value="1"/>
</dbReference>
<dbReference type="Gene3D" id="3.30.160.810">
    <property type="match status" value="1"/>
</dbReference>
<dbReference type="Gene3D" id="2.40.30.10">
    <property type="entry name" value="Translation factors"/>
    <property type="match status" value="1"/>
</dbReference>
<dbReference type="HAMAP" id="MF_01325_B">
    <property type="entry name" value="Ribosomal_uL3_B"/>
    <property type="match status" value="1"/>
</dbReference>
<dbReference type="InterPro" id="IPR000597">
    <property type="entry name" value="Ribosomal_uL3"/>
</dbReference>
<dbReference type="InterPro" id="IPR019927">
    <property type="entry name" value="Ribosomal_uL3_bac/org-type"/>
</dbReference>
<dbReference type="InterPro" id="IPR019926">
    <property type="entry name" value="Ribosomal_uL3_CS"/>
</dbReference>
<dbReference type="InterPro" id="IPR009000">
    <property type="entry name" value="Transl_B-barrel_sf"/>
</dbReference>
<dbReference type="NCBIfam" id="TIGR03625">
    <property type="entry name" value="L3_bact"/>
    <property type="match status" value="1"/>
</dbReference>
<dbReference type="PANTHER" id="PTHR11229">
    <property type="entry name" value="50S RIBOSOMAL PROTEIN L3"/>
    <property type="match status" value="1"/>
</dbReference>
<dbReference type="PANTHER" id="PTHR11229:SF16">
    <property type="entry name" value="LARGE RIBOSOMAL SUBUNIT PROTEIN UL3C"/>
    <property type="match status" value="1"/>
</dbReference>
<dbReference type="Pfam" id="PF00297">
    <property type="entry name" value="Ribosomal_L3"/>
    <property type="match status" value="1"/>
</dbReference>
<dbReference type="SUPFAM" id="SSF50447">
    <property type="entry name" value="Translation proteins"/>
    <property type="match status" value="1"/>
</dbReference>
<dbReference type="PROSITE" id="PS00474">
    <property type="entry name" value="RIBOSOMAL_L3"/>
    <property type="match status" value="1"/>
</dbReference>
<comment type="function">
    <text evidence="1">One of the primary rRNA binding proteins, it binds directly near the 3'-end of the 23S rRNA, where it nucleates assembly of the 50S subunit.</text>
</comment>
<comment type="subunit">
    <text evidence="1">Part of the 50S ribosomal subunit. Forms a cluster with proteins L14 and L19.</text>
</comment>
<comment type="PTM">
    <text evidence="1">Methylated by PrmB.</text>
</comment>
<comment type="similarity">
    <text evidence="1">Belongs to the universal ribosomal protein uL3 family.</text>
</comment>
<organism>
    <name type="scientific">Brucella abortus (strain 2308)</name>
    <dbReference type="NCBI Taxonomy" id="359391"/>
    <lineage>
        <taxon>Bacteria</taxon>
        <taxon>Pseudomonadati</taxon>
        <taxon>Pseudomonadota</taxon>
        <taxon>Alphaproteobacteria</taxon>
        <taxon>Hyphomicrobiales</taxon>
        <taxon>Brucellaceae</taxon>
        <taxon>Brucella/Ochrobactrum group</taxon>
        <taxon>Brucella</taxon>
    </lineage>
</organism>
<sequence length="237" mass="25064">MRSGVIAQKLGMTRVYNDAGEHVPVTVLRMENCHVVAQRTVEKNGYTAVQLGVGMAKVKNTSKAMRGHFAKAEVEPKAKLAEFRVSPDNLLEVGVEITAEHFVAGQKVDVTGTSIGKGFAGVMKRHNFGGHRASHGNSITHRSHGSTGQRQDPGKVFKGKKMAGHMGQTRVTTQNIEVVSTDSDRGLILVRGAVPGSKGAWILVRDAVKASLPENAPKPAGLRAGAKAEAAATEGGE</sequence>
<reference key="1">
    <citation type="journal article" date="2005" name="Infect. Immun.">
        <title>Whole-genome analyses of speciation events in pathogenic Brucellae.</title>
        <authorList>
            <person name="Chain P.S."/>
            <person name="Comerci D.J."/>
            <person name="Tolmasky M.E."/>
            <person name="Larimer F.W."/>
            <person name="Malfatti S.A."/>
            <person name="Vergez L.M."/>
            <person name="Aguero F."/>
            <person name="Land M.L."/>
            <person name="Ugalde R.A."/>
            <person name="Garcia E."/>
        </authorList>
    </citation>
    <scope>NUCLEOTIDE SEQUENCE [LARGE SCALE GENOMIC DNA]</scope>
    <source>
        <strain>2308</strain>
    </source>
</reference>
<protein>
    <recommendedName>
        <fullName evidence="1">Large ribosomal subunit protein uL3</fullName>
    </recommendedName>
    <alternativeName>
        <fullName evidence="3">50S ribosomal protein L3</fullName>
    </alternativeName>
</protein>